<accession>Q1M813</accession>
<feature type="chain" id="PRO_0000403304" description="N-acyl homoserine lactonase AttM">
    <location>
        <begin position="1"/>
        <end position="263"/>
    </location>
</feature>
<feature type="binding site" evidence="1">
    <location>
        <position position="103"/>
    </location>
    <ligand>
        <name>Zn(2+)</name>
        <dbReference type="ChEBI" id="CHEBI:29105"/>
        <label>1</label>
    </ligand>
</feature>
<feature type="binding site" evidence="1">
    <location>
        <position position="105"/>
    </location>
    <ligand>
        <name>Zn(2+)</name>
        <dbReference type="ChEBI" id="CHEBI:29105"/>
        <label>1</label>
    </ligand>
</feature>
<feature type="binding site" evidence="1">
    <location>
        <position position="107"/>
    </location>
    <ligand>
        <name>Zn(2+)</name>
        <dbReference type="ChEBI" id="CHEBI:29105"/>
        <label>2</label>
    </ligand>
</feature>
<feature type="binding site" evidence="1">
    <location>
        <position position="108"/>
    </location>
    <ligand>
        <name>Zn(2+)</name>
        <dbReference type="ChEBI" id="CHEBI:29105"/>
        <label>2</label>
    </ligand>
</feature>
<feature type="binding site" evidence="1">
    <location>
        <position position="180"/>
    </location>
    <ligand>
        <name>Zn(2+)</name>
        <dbReference type="ChEBI" id="CHEBI:29105"/>
        <label>1</label>
    </ligand>
</feature>
<feature type="binding site" evidence="1">
    <location>
        <position position="202"/>
    </location>
    <ligand>
        <name>Zn(2+)</name>
        <dbReference type="ChEBI" id="CHEBI:29105"/>
        <label>1</label>
    </ligand>
</feature>
<feature type="binding site" evidence="1">
    <location>
        <position position="202"/>
    </location>
    <ligand>
        <name>Zn(2+)</name>
        <dbReference type="ChEBI" id="CHEBI:29105"/>
        <label>2</label>
    </ligand>
</feature>
<feature type="binding site" evidence="1">
    <location>
        <position position="247"/>
    </location>
    <ligand>
        <name>Zn(2+)</name>
        <dbReference type="ChEBI" id="CHEBI:29105"/>
        <label>2</label>
    </ligand>
</feature>
<comment type="catalytic activity">
    <reaction evidence="2">
        <text>an N-acyl-L-homoserine lactone + H2O = an N-acyl-L-homoserine + H(+)</text>
        <dbReference type="Rhea" id="RHEA:22576"/>
        <dbReference type="ChEBI" id="CHEBI:15377"/>
        <dbReference type="ChEBI" id="CHEBI:15378"/>
        <dbReference type="ChEBI" id="CHEBI:55474"/>
        <dbReference type="ChEBI" id="CHEBI:58921"/>
        <dbReference type="EC" id="3.1.1.81"/>
    </reaction>
</comment>
<comment type="cofactor">
    <cofactor evidence="1">
        <name>Zn(2+)</name>
        <dbReference type="ChEBI" id="CHEBI:29105"/>
    </cofactor>
    <text evidence="1">Binds 2 Zn(2+) ions per subunit.</text>
</comment>
<comment type="similarity">
    <text evidence="3">Belongs to the metallo-beta-lactamase superfamily.</text>
</comment>
<name>AHLLM_RHIJ3</name>
<dbReference type="EC" id="3.1.1.81"/>
<dbReference type="EMBL" id="AM236084">
    <property type="protein sequence ID" value="CAK10359.1"/>
    <property type="molecule type" value="Genomic_DNA"/>
</dbReference>
<dbReference type="RefSeq" id="WP_011654183.1">
    <property type="nucleotide sequence ID" value="NC_008381.1"/>
</dbReference>
<dbReference type="SMR" id="Q1M813"/>
<dbReference type="EnsemblBacteria" id="CAK10359">
    <property type="protein sequence ID" value="CAK10359"/>
    <property type="gene ID" value="pRL100136"/>
</dbReference>
<dbReference type="KEGG" id="rle:pRL100136"/>
<dbReference type="HOGENOM" id="CLU_030571_3_2_5"/>
<dbReference type="Proteomes" id="UP000006575">
    <property type="component" value="Plasmid pRL10"/>
</dbReference>
<dbReference type="GO" id="GO:0102007">
    <property type="term" value="F:acyl-L-homoserine-lactone lactonohydrolase activity"/>
    <property type="evidence" value="ECO:0007669"/>
    <property type="project" value="UniProtKB-EC"/>
</dbReference>
<dbReference type="GO" id="GO:0046872">
    <property type="term" value="F:metal ion binding"/>
    <property type="evidence" value="ECO:0007669"/>
    <property type="project" value="UniProtKB-KW"/>
</dbReference>
<dbReference type="CDD" id="cd07729">
    <property type="entry name" value="AHL_lactonase_MBL-fold"/>
    <property type="match status" value="1"/>
</dbReference>
<dbReference type="Gene3D" id="3.60.15.10">
    <property type="entry name" value="Ribonuclease Z/Hydroxyacylglutathione hydrolase-like"/>
    <property type="match status" value="1"/>
</dbReference>
<dbReference type="InterPro" id="IPR054889">
    <property type="entry name" value="AHLLactAttM"/>
</dbReference>
<dbReference type="InterPro" id="IPR051013">
    <property type="entry name" value="MBL_superfamily_lactonases"/>
</dbReference>
<dbReference type="InterPro" id="IPR001279">
    <property type="entry name" value="Metallo-B-lactamas"/>
</dbReference>
<dbReference type="InterPro" id="IPR036866">
    <property type="entry name" value="RibonucZ/Hydroxyglut_hydro"/>
</dbReference>
<dbReference type="NCBIfam" id="NF045700">
    <property type="entry name" value="AHLLactAttM"/>
    <property type="match status" value="1"/>
</dbReference>
<dbReference type="PANTHER" id="PTHR42978:SF2">
    <property type="entry name" value="102 KBASES UNSTABLE REGION: FROM 1 TO 119443"/>
    <property type="match status" value="1"/>
</dbReference>
<dbReference type="PANTHER" id="PTHR42978">
    <property type="entry name" value="QUORUM-QUENCHING LACTONASE YTNP-RELATED-RELATED"/>
    <property type="match status" value="1"/>
</dbReference>
<dbReference type="Pfam" id="PF00753">
    <property type="entry name" value="Lactamase_B"/>
    <property type="match status" value="1"/>
</dbReference>
<dbReference type="SMART" id="SM00849">
    <property type="entry name" value="Lactamase_B"/>
    <property type="match status" value="1"/>
</dbReference>
<dbReference type="SUPFAM" id="SSF56281">
    <property type="entry name" value="Metallo-hydrolase/oxidoreductase"/>
    <property type="match status" value="1"/>
</dbReference>
<proteinExistence type="inferred from homology"/>
<sequence>MTDIRLYMLQSGTLKCKVHNIKMNQGNGADYEIPVPFYLITHPDGHTIIDGGNAIEVATDPRGHWGGICDVYWPVLDKDKGCVDQVKALGFDPAEVRYVVQSHLHLDHTGAIGRFPNATHIVQRAEYEYAFTPDWFAGGGYIRKDFDRPGLKWQFLNGTQDDFYDVYGDGTLTTIFSPGHAMGHQSFLVRLPSSEPLLLTIDAAYTLDHWEEKALPGFLASTVDTVRSVQKLRTIAERTGANVVTGHDPAAWSTFKKAPEYYS</sequence>
<evidence type="ECO:0000250" key="1">
    <source>
        <dbReference type="UniProtKB" id="Q7B8B9"/>
    </source>
</evidence>
<evidence type="ECO:0000250" key="2">
    <source>
        <dbReference type="UniProtKB" id="Q8VPD5"/>
    </source>
</evidence>
<evidence type="ECO:0000305" key="3"/>
<evidence type="ECO:0000312" key="4">
    <source>
        <dbReference type="EMBL" id="CAK10359.1"/>
    </source>
</evidence>
<keyword id="KW-0378">Hydrolase</keyword>
<keyword id="KW-0479">Metal-binding</keyword>
<keyword id="KW-0614">Plasmid</keyword>
<keyword id="KW-0862">Zinc</keyword>
<reference key="1">
    <citation type="journal article" date="2006" name="Genome Biol.">
        <title>The genome of Rhizobium leguminosarum has recognizable core and accessory components.</title>
        <authorList>
            <person name="Young J.P.W."/>
            <person name="Crossman L.C."/>
            <person name="Johnston A.W.B."/>
            <person name="Thomson N.R."/>
            <person name="Ghazoui Z.F."/>
            <person name="Hull K.H."/>
            <person name="Wexler M."/>
            <person name="Curson A.R.J."/>
            <person name="Todd J.D."/>
            <person name="Poole P.S."/>
            <person name="Mauchline T.H."/>
            <person name="East A.K."/>
            <person name="Quail M.A."/>
            <person name="Churcher C."/>
            <person name="Arrowsmith C."/>
            <person name="Cherevach I."/>
            <person name="Chillingworth T."/>
            <person name="Clarke K."/>
            <person name="Cronin A."/>
            <person name="Davis P."/>
            <person name="Fraser A."/>
            <person name="Hance Z."/>
            <person name="Hauser H."/>
            <person name="Jagels K."/>
            <person name="Moule S."/>
            <person name="Mungall K."/>
            <person name="Norbertczak H."/>
            <person name="Rabbinowitsch E."/>
            <person name="Sanders M."/>
            <person name="Simmonds M."/>
            <person name="Whitehead S."/>
            <person name="Parkhill J."/>
        </authorList>
    </citation>
    <scope>NUCLEOTIDE SEQUENCE [LARGE SCALE GENOMIC DNA]</scope>
    <source>
        <strain>DSM 114642 / LMG 32736 / 3841</strain>
    </source>
</reference>
<protein>
    <recommendedName>
        <fullName evidence="2">N-acyl homoserine lactonase AttM</fullName>
        <shortName evidence="2">AHL-lactonase AttM</shortName>
        <ecNumber>3.1.1.81</ecNumber>
    </recommendedName>
</protein>
<gene>
    <name evidence="2" type="primary">attM</name>
    <name type="ordered locus">pRL100136</name>
</gene>
<geneLocation type="plasmid" evidence="4">
    <name>pRL10</name>
</geneLocation>
<organism>
    <name type="scientific">Rhizobium johnstonii (strain DSM 114642 / LMG 32736 / 3841)</name>
    <name type="common">Rhizobium leguminosarum bv. viciae</name>
    <dbReference type="NCBI Taxonomy" id="216596"/>
    <lineage>
        <taxon>Bacteria</taxon>
        <taxon>Pseudomonadati</taxon>
        <taxon>Pseudomonadota</taxon>
        <taxon>Alphaproteobacteria</taxon>
        <taxon>Hyphomicrobiales</taxon>
        <taxon>Rhizobiaceae</taxon>
        <taxon>Rhizobium/Agrobacterium group</taxon>
        <taxon>Rhizobium</taxon>
        <taxon>Rhizobium johnstonii</taxon>
    </lineage>
</organism>